<feature type="chain" id="PRO_0000432812" description="Guanine nucleotide-binding protein subunit gamma 1">
    <location>
        <begin position="1"/>
        <end position="90"/>
    </location>
</feature>
<feature type="propeptide" id="PRO_0000433235" description="Removed in mature form" evidence="2">
    <location>
        <begin position="91"/>
        <end position="93"/>
    </location>
</feature>
<feature type="domain" description="G protein gamma" evidence="4">
    <location>
        <begin position="20"/>
        <end position="93"/>
    </location>
</feature>
<feature type="coiled-coil region" evidence="3">
    <location>
        <begin position="12"/>
        <end position="52"/>
    </location>
</feature>
<feature type="modified residue" description="Cysteine methyl ester" evidence="2">
    <location>
        <position position="90"/>
    </location>
</feature>
<feature type="lipid moiety-binding region" description="S-palmitoyl cysteine" evidence="2">
    <location>
        <position position="88"/>
    </location>
</feature>
<feature type="lipid moiety-binding region" description="S-farnesyl cysteine" evidence="2">
    <location>
        <position position="90"/>
    </location>
</feature>
<sequence length="93" mass="10491">MQAGGGGDAGDTRGRHRIQAELKKLEQEARFLEEELEELDKTDKVSAALQELMVTAESKADPLLPVTTGPACQSWDRWFEGPQDLRRCKCWFL</sequence>
<evidence type="ECO:0000250" key="1">
    <source>
        <dbReference type="UniProtKB" id="Q75WU1"/>
    </source>
</evidence>
<evidence type="ECO:0000250" key="2">
    <source>
        <dbReference type="UniProtKB" id="Q9FDX9"/>
    </source>
</evidence>
<evidence type="ECO:0000255" key="3"/>
<evidence type="ECO:0000255" key="4">
    <source>
        <dbReference type="PROSITE-ProRule" id="PRU00592"/>
    </source>
</evidence>
<evidence type="ECO:0000305" key="5"/>
<evidence type="ECO:0000312" key="6">
    <source>
        <dbReference type="EMBL" id="EEC75798.1"/>
    </source>
</evidence>
<reference key="1">
    <citation type="submission" date="2009-10" db="EMBL/GenBank/DDBJ databases">
        <title>Isolation, cloning and characterization of gamma 1 subunit of G protein heterotrimer complex from Oryza sativa cultivar indica, Swarna.</title>
        <authorList>
            <person name="Yadav D.K."/>
            <person name="Tuteja N."/>
        </authorList>
    </citation>
    <scope>NUCLEOTIDE SEQUENCE [MRNA]</scope>
    <source>
        <strain>cv. Swarna</strain>
    </source>
</reference>
<reference key="2">
    <citation type="journal article" date="2005" name="PLoS Biol.">
        <title>The genomes of Oryza sativa: a history of duplications.</title>
        <authorList>
            <person name="Yu J."/>
            <person name="Wang J."/>
            <person name="Lin W."/>
            <person name="Li S."/>
            <person name="Li H."/>
            <person name="Zhou J."/>
            <person name="Ni P."/>
            <person name="Dong W."/>
            <person name="Hu S."/>
            <person name="Zeng C."/>
            <person name="Zhang J."/>
            <person name="Zhang Y."/>
            <person name="Li R."/>
            <person name="Xu Z."/>
            <person name="Li S."/>
            <person name="Li X."/>
            <person name="Zheng H."/>
            <person name="Cong L."/>
            <person name="Lin L."/>
            <person name="Yin J."/>
            <person name="Geng J."/>
            <person name="Li G."/>
            <person name="Shi J."/>
            <person name="Liu J."/>
            <person name="Lv H."/>
            <person name="Li J."/>
            <person name="Wang J."/>
            <person name="Deng Y."/>
            <person name="Ran L."/>
            <person name="Shi X."/>
            <person name="Wang X."/>
            <person name="Wu Q."/>
            <person name="Li C."/>
            <person name="Ren X."/>
            <person name="Wang J."/>
            <person name="Wang X."/>
            <person name="Li D."/>
            <person name="Liu D."/>
            <person name="Zhang X."/>
            <person name="Ji Z."/>
            <person name="Zhao W."/>
            <person name="Sun Y."/>
            <person name="Zhang Z."/>
            <person name="Bao J."/>
            <person name="Han Y."/>
            <person name="Dong L."/>
            <person name="Ji J."/>
            <person name="Chen P."/>
            <person name="Wu S."/>
            <person name="Liu J."/>
            <person name="Xiao Y."/>
            <person name="Bu D."/>
            <person name="Tan J."/>
            <person name="Yang L."/>
            <person name="Ye C."/>
            <person name="Zhang J."/>
            <person name="Xu J."/>
            <person name="Zhou Y."/>
            <person name="Yu Y."/>
            <person name="Zhang B."/>
            <person name="Zhuang S."/>
            <person name="Wei H."/>
            <person name="Liu B."/>
            <person name="Lei M."/>
            <person name="Yu H."/>
            <person name="Li Y."/>
            <person name="Xu H."/>
            <person name="Wei S."/>
            <person name="He X."/>
            <person name="Fang L."/>
            <person name="Zhang Z."/>
            <person name="Zhang Y."/>
            <person name="Huang X."/>
            <person name="Su Z."/>
            <person name="Tong W."/>
            <person name="Li J."/>
            <person name="Tong Z."/>
            <person name="Li S."/>
            <person name="Ye J."/>
            <person name="Wang L."/>
            <person name="Fang L."/>
            <person name="Lei T."/>
            <person name="Chen C.-S."/>
            <person name="Chen H.-C."/>
            <person name="Xu Z."/>
            <person name="Li H."/>
            <person name="Huang H."/>
            <person name="Zhang F."/>
            <person name="Xu H."/>
            <person name="Li N."/>
            <person name="Zhao C."/>
            <person name="Li S."/>
            <person name="Dong L."/>
            <person name="Huang Y."/>
            <person name="Li L."/>
            <person name="Xi Y."/>
            <person name="Qi Q."/>
            <person name="Li W."/>
            <person name="Zhang B."/>
            <person name="Hu W."/>
            <person name="Zhang Y."/>
            <person name="Tian X."/>
            <person name="Jiao Y."/>
            <person name="Liang X."/>
            <person name="Jin J."/>
            <person name="Gao L."/>
            <person name="Zheng W."/>
            <person name="Hao B."/>
            <person name="Liu S.-M."/>
            <person name="Wang W."/>
            <person name="Yuan L."/>
            <person name="Cao M."/>
            <person name="McDermott J."/>
            <person name="Samudrala R."/>
            <person name="Wang J."/>
            <person name="Wong G.K.-S."/>
            <person name="Yang H."/>
        </authorList>
    </citation>
    <scope>NUCLEOTIDE SEQUENCE [LARGE SCALE GENOMIC DNA]</scope>
    <source>
        <strain>cv. 93-11</strain>
    </source>
</reference>
<gene>
    <name evidence="5" type="primary">RGG1</name>
    <name evidence="6" type="ORF">OsI_12732</name>
</gene>
<name>GG1_ORYSI</name>
<accession>B8AN27</accession>
<comment type="function">
    <text evidence="1">Guanine nucleotide-binding proteins (G proteins) are involved as modulators or transducers in various transmembrane signaling systems.</text>
</comment>
<comment type="subunit">
    <text evidence="1">G proteins are composed of 3 units, alpha, beta and gamma. Interacts with the beta subunit RGB1.</text>
</comment>
<comment type="subcellular location">
    <subcellularLocation>
        <location evidence="1">Cell membrane</location>
        <topology evidence="1">Lipid-anchor</topology>
        <topology evidence="1">GPI-anchor</topology>
    </subcellularLocation>
</comment>
<proteinExistence type="inferred from homology"/>
<keyword id="KW-1003">Cell membrane</keyword>
<keyword id="KW-0175">Coiled coil</keyword>
<keyword id="KW-0325">Glycoprotein</keyword>
<keyword id="KW-0336">GPI-anchor</keyword>
<keyword id="KW-0449">Lipoprotein</keyword>
<keyword id="KW-0472">Membrane</keyword>
<keyword id="KW-0488">Methylation</keyword>
<keyword id="KW-0564">Palmitate</keyword>
<keyword id="KW-0636">Prenylation</keyword>
<keyword id="KW-1185">Reference proteome</keyword>
<keyword id="KW-0807">Transducer</keyword>
<dbReference type="EMBL" id="GU111573">
    <property type="protein sequence ID" value="ACY69169.1"/>
    <property type="molecule type" value="mRNA"/>
</dbReference>
<dbReference type="EMBL" id="CM000128">
    <property type="protein sequence ID" value="EEC75798.1"/>
    <property type="molecule type" value="Genomic_DNA"/>
</dbReference>
<dbReference type="SMR" id="B8AN27"/>
<dbReference type="STRING" id="39946.B8AN27"/>
<dbReference type="EnsemblPlants" id="BGIOSGA010189-TA">
    <property type="protein sequence ID" value="BGIOSGA010189-PA"/>
    <property type="gene ID" value="BGIOSGA010189"/>
</dbReference>
<dbReference type="EnsemblPlants" id="OsLiXu_03g0026790.01">
    <property type="protein sequence ID" value="OsLiXu_03g0026790.01"/>
    <property type="gene ID" value="OsLiXu_03g0026790"/>
</dbReference>
<dbReference type="Gramene" id="BGIOSGA010189-TA">
    <property type="protein sequence ID" value="BGIOSGA010189-PA"/>
    <property type="gene ID" value="BGIOSGA010189"/>
</dbReference>
<dbReference type="Gramene" id="OsLiXu_03g0026790.01">
    <property type="protein sequence ID" value="OsLiXu_03g0026790.01"/>
    <property type="gene ID" value="OsLiXu_03g0026790"/>
</dbReference>
<dbReference type="HOGENOM" id="CLU_105699_2_0_1"/>
<dbReference type="OMA" id="DRWFERP"/>
<dbReference type="Proteomes" id="UP000007015">
    <property type="component" value="Chromosome 3"/>
</dbReference>
<dbReference type="GO" id="GO:0005886">
    <property type="term" value="C:plasma membrane"/>
    <property type="evidence" value="ECO:0007669"/>
    <property type="project" value="UniProtKB-SubCell"/>
</dbReference>
<dbReference type="GO" id="GO:0098552">
    <property type="term" value="C:side of membrane"/>
    <property type="evidence" value="ECO:0007669"/>
    <property type="project" value="UniProtKB-KW"/>
</dbReference>
<dbReference type="GO" id="GO:0007186">
    <property type="term" value="P:G protein-coupled receptor signaling pathway"/>
    <property type="evidence" value="ECO:0007669"/>
    <property type="project" value="InterPro"/>
</dbReference>
<dbReference type="InterPro" id="IPR015898">
    <property type="entry name" value="G-protein_gamma-like_dom"/>
</dbReference>
<dbReference type="InterPro" id="IPR045878">
    <property type="entry name" value="GG1/2"/>
</dbReference>
<dbReference type="PANTHER" id="PTHR35129">
    <property type="entry name" value="GUANINE NUCLEOTIDE-BINDING PROTEIN SUBUNIT GAMMA 1"/>
    <property type="match status" value="1"/>
</dbReference>
<dbReference type="PANTHER" id="PTHR35129:SF1">
    <property type="entry name" value="GUANINE NUCLEOTIDE-BINDING PROTEIN SUBUNIT GAMMA 1"/>
    <property type="match status" value="1"/>
</dbReference>
<dbReference type="Pfam" id="PF00631">
    <property type="entry name" value="G-gamma"/>
    <property type="match status" value="1"/>
</dbReference>
<dbReference type="SMART" id="SM01224">
    <property type="entry name" value="G_gamma"/>
    <property type="match status" value="1"/>
</dbReference>
<protein>
    <recommendedName>
        <fullName evidence="5">Guanine nucleotide-binding protein subunit gamma 1</fullName>
    </recommendedName>
    <alternativeName>
        <fullName evidence="5">Ggamma-subunit 1</fullName>
    </alternativeName>
    <alternativeName>
        <fullName evidence="5">Heterotrimeric G protein gamma-subunit 1</fullName>
    </alternativeName>
</protein>
<organism>
    <name type="scientific">Oryza sativa subsp. indica</name>
    <name type="common">Rice</name>
    <dbReference type="NCBI Taxonomy" id="39946"/>
    <lineage>
        <taxon>Eukaryota</taxon>
        <taxon>Viridiplantae</taxon>
        <taxon>Streptophyta</taxon>
        <taxon>Embryophyta</taxon>
        <taxon>Tracheophyta</taxon>
        <taxon>Spermatophyta</taxon>
        <taxon>Magnoliopsida</taxon>
        <taxon>Liliopsida</taxon>
        <taxon>Poales</taxon>
        <taxon>Poaceae</taxon>
        <taxon>BOP clade</taxon>
        <taxon>Oryzoideae</taxon>
        <taxon>Oryzeae</taxon>
        <taxon>Oryzinae</taxon>
        <taxon>Oryza</taxon>
        <taxon>Oryza sativa</taxon>
    </lineage>
</organism>